<name>OLES1_BRANA</name>
<reference key="1">
    <citation type="journal article" date="2009" name="Proteomics">
        <title>Protein composition of oil bodies from mature Brassica napus seeds.</title>
        <authorList>
            <person name="Jolivet P."/>
            <person name="Boulard C."/>
            <person name="Bellamy A."/>
            <person name="Larre C."/>
            <person name="Barre M."/>
            <person name="Rogniaux H."/>
            <person name="d'Andrea S."/>
            <person name="Chardot T."/>
            <person name="Nesi N."/>
        </authorList>
    </citation>
    <scope>NUCLEOTIDE SEQUENCE [MRNA]</scope>
    <scope>ACETYLATION AT ALA-2</scope>
    <scope>CLEAVAGE OF INITIATOR METHIONINE</scope>
    <scope>SUBCELLULAR LOCATION</scope>
    <scope>IDENTIFICATION BY MASS SPECTROMETRY</scope>
</reference>
<organism>
    <name type="scientific">Brassica napus</name>
    <name type="common">Rape</name>
    <dbReference type="NCBI Taxonomy" id="3708"/>
    <lineage>
        <taxon>Eukaryota</taxon>
        <taxon>Viridiplantae</taxon>
        <taxon>Streptophyta</taxon>
        <taxon>Embryophyta</taxon>
        <taxon>Tracheophyta</taxon>
        <taxon>Spermatophyta</taxon>
        <taxon>Magnoliopsida</taxon>
        <taxon>eudicotyledons</taxon>
        <taxon>Gunneridae</taxon>
        <taxon>Pentapetalae</taxon>
        <taxon>rosids</taxon>
        <taxon>malvids</taxon>
        <taxon>Brassicales</taxon>
        <taxon>Brassicaceae</taxon>
        <taxon>Brassiceae</taxon>
        <taxon>Brassica</taxon>
    </lineage>
</organism>
<protein>
    <recommendedName>
        <fullName>Oleosin S1-2</fullName>
    </recommendedName>
</protein>
<proteinExistence type="evidence at protein level"/>
<feature type="initiator methionine" description="Removed" evidence="4">
    <location>
        <position position="1"/>
    </location>
</feature>
<feature type="chain" id="PRO_0000381927" description="Oleosin S1-2">
    <location>
        <begin position="2"/>
        <end position="193"/>
    </location>
</feature>
<feature type="transmembrane region" description="Helical" evidence="2">
    <location>
        <begin position="37"/>
        <end position="57"/>
    </location>
</feature>
<feature type="transmembrane region" description="Helical" evidence="2">
    <location>
        <begin position="66"/>
        <end position="86"/>
    </location>
</feature>
<feature type="transmembrane region" description="Helical" evidence="2">
    <location>
        <begin position="87"/>
        <end position="107"/>
    </location>
</feature>
<feature type="region of interest" description="Polar" evidence="1">
    <location>
        <begin position="2"/>
        <end position="39"/>
    </location>
</feature>
<feature type="region of interest" description="Hydrophobic" evidence="1">
    <location>
        <begin position="40"/>
        <end position="113"/>
    </location>
</feature>
<feature type="region of interest" description="Disordered" evidence="3">
    <location>
        <begin position="139"/>
        <end position="193"/>
    </location>
</feature>
<feature type="compositionally biased region" description="Basic and acidic residues" evidence="3">
    <location>
        <begin position="142"/>
        <end position="193"/>
    </location>
</feature>
<feature type="modified residue" description="N-acetylalanine" evidence="4">
    <location>
        <position position="2"/>
    </location>
</feature>
<dbReference type="EMBL" id="EU678257">
    <property type="protein sequence ID" value="ACG69505.1"/>
    <property type="molecule type" value="mRNA"/>
</dbReference>
<dbReference type="SMR" id="C3S7F0"/>
<dbReference type="iPTMnet" id="C3S7F0"/>
<dbReference type="GO" id="GO:0016020">
    <property type="term" value="C:membrane"/>
    <property type="evidence" value="ECO:0007669"/>
    <property type="project" value="UniProtKB-SubCell"/>
</dbReference>
<dbReference type="GO" id="GO:0012511">
    <property type="term" value="C:monolayer-surrounded lipid storage body"/>
    <property type="evidence" value="ECO:0007669"/>
    <property type="project" value="InterPro"/>
</dbReference>
<dbReference type="GO" id="GO:0009791">
    <property type="term" value="P:post-embryonic development"/>
    <property type="evidence" value="ECO:0007669"/>
    <property type="project" value="UniProtKB-ARBA"/>
</dbReference>
<dbReference type="GO" id="GO:0048608">
    <property type="term" value="P:reproductive structure development"/>
    <property type="evidence" value="ECO:0007669"/>
    <property type="project" value="UniProtKB-ARBA"/>
</dbReference>
<dbReference type="InterPro" id="IPR000136">
    <property type="entry name" value="Oleosin"/>
</dbReference>
<dbReference type="PANTHER" id="PTHR33203">
    <property type="entry name" value="OLEOSIN"/>
    <property type="match status" value="1"/>
</dbReference>
<dbReference type="PANTHER" id="PTHR33203:SF61">
    <property type="entry name" value="OLEOSIN 5"/>
    <property type="match status" value="1"/>
</dbReference>
<dbReference type="Pfam" id="PF01277">
    <property type="entry name" value="Oleosin"/>
    <property type="match status" value="1"/>
</dbReference>
<evidence type="ECO:0000250" key="1"/>
<evidence type="ECO:0000255" key="2"/>
<evidence type="ECO:0000256" key="3">
    <source>
        <dbReference type="SAM" id="MobiDB-lite"/>
    </source>
</evidence>
<evidence type="ECO:0000269" key="4">
    <source>
    </source>
</evidence>
<evidence type="ECO:0000305" key="5"/>
<comment type="function">
    <text evidence="1">May have a structural role to stabilize the lipid body during desiccation of the seed by preventing coalescence of the oil. Probably interacts with both lipid and phospholipid moieties of lipid bodies. May also provide recognition signals for specific lipase anchorage in lipolysis during seedling growth (By similarity).</text>
</comment>
<comment type="subcellular location">
    <subcellularLocation>
        <location evidence="4">Lipid droplet</location>
    </subcellularLocation>
    <subcellularLocation>
        <location evidence="4">Membrane</location>
        <topology evidence="4">Multi-pass membrane protein</topology>
    </subcellularLocation>
    <text>Surface of oil bodies. Oleosins exist at a monolayer lipid/water interface.</text>
</comment>
<comment type="similarity">
    <text evidence="5">Belongs to the oleosin family.</text>
</comment>
<gene>
    <name type="primary">S1</name>
</gene>
<sequence length="193" mass="20722">MADVRTHAHQVQVHPLRQHEGGIKVVYPQSGPSSTQVLAVVAGVPVGGTLLTLAGLTLAVSVIGLILAFPLFLIFSPVIVPAAFVIGLAMTGFMASGAIGLTGLSSMSWVLNHIRRVRERIPDELDEAKQRLADMAEYAGQRTKDAGQTIEDKAHDVRESKTYDVRDRDTKGHTASGGDRDTKTTREVRVATT</sequence>
<keyword id="KW-0007">Acetylation</keyword>
<keyword id="KW-0551">Lipid droplet</keyword>
<keyword id="KW-0472">Membrane</keyword>
<keyword id="KW-0812">Transmembrane</keyword>
<keyword id="KW-1133">Transmembrane helix</keyword>
<accession>C3S7F0</accession>